<gene>
    <name evidence="1" type="primary">psb30</name>
    <name evidence="1" type="synonym">ycf12</name>
</gene>
<geneLocation type="chloroplast"/>
<comment type="function">
    <text evidence="1">A core subunit of photosystem II (PSII), probably helps stabilize the reaction center.</text>
</comment>
<comment type="subunit">
    <text evidence="1">PSII is composed of 1 copy each of membrane proteins PsbA, PsbB, PsbC, PsbD, PsbE, PsbF, PsbH, PsbI, PsbJ, PsbK, PsbL, PsbM, PsbT, PsbX, PsbY, PsbZ, Psb30/Ycf12, peripheral proteins of the oxygen-evolving complex and a large number of cofactors. It forms dimeric complexes.</text>
</comment>
<comment type="subcellular location">
    <subcellularLocation>
        <location evidence="1">Plastid</location>
        <location evidence="1">Chloroplast thylakoid membrane</location>
        <topology evidence="1">Single-pass membrane protein</topology>
    </subcellularLocation>
</comment>
<comment type="similarity">
    <text evidence="1">Belongs to the Psb30/Ycf12 family.</text>
</comment>
<keyword id="KW-0002">3D-structure</keyword>
<keyword id="KW-0150">Chloroplast</keyword>
<keyword id="KW-0472">Membrane</keyword>
<keyword id="KW-0602">Photosynthesis</keyword>
<keyword id="KW-0604">Photosystem II</keyword>
<keyword id="KW-0934">Plastid</keyword>
<keyword id="KW-0793">Thylakoid</keyword>
<keyword id="KW-0812">Transmembrane</keyword>
<keyword id="KW-1133">Transmembrane helix</keyword>
<evidence type="ECO:0000255" key="1">
    <source>
        <dbReference type="HAMAP-Rule" id="MF_01329"/>
    </source>
</evidence>
<evidence type="ECO:0007829" key="2">
    <source>
        <dbReference type="PDB" id="8XLP"/>
    </source>
</evidence>
<name>PSB30_RHDSA</name>
<organism>
    <name type="scientific">Rhodomonas salina</name>
    <name type="common">Cryptomonas salina</name>
    <dbReference type="NCBI Taxonomy" id="52970"/>
    <lineage>
        <taxon>Eukaryota</taxon>
        <taxon>Cryptophyceae</taxon>
        <taxon>Pyrenomonadales</taxon>
        <taxon>Pyrenomonadaceae</taxon>
        <taxon>Rhodomonas</taxon>
    </lineage>
</organism>
<reference key="1">
    <citation type="journal article" date="2007" name="Mol. Biol. Evol.">
        <title>Plastid genome sequence of the cryptophyte alga Rhodomonas salina CCMP1319: lateral transfer of putative DNA replication machinery and a test of chromist plastid phylogeny.</title>
        <authorList>
            <person name="Khan H."/>
            <person name="Parks N."/>
            <person name="Kozera C."/>
            <person name="Curtis B.A."/>
            <person name="Parsons B.J."/>
            <person name="Bowman S."/>
            <person name="Archibald J.M."/>
        </authorList>
    </citation>
    <scope>NUCLEOTIDE SEQUENCE [LARGE SCALE GENOMIC DNA]</scope>
    <source>
        <strain>CCMP1319 / NEPCC76 / CS-174</strain>
    </source>
</reference>
<dbReference type="EMBL" id="EF508371">
    <property type="protein sequence ID" value="ABO70743.1"/>
    <property type="molecule type" value="Genomic_DNA"/>
</dbReference>
<dbReference type="RefSeq" id="YP_001293528.1">
    <property type="nucleotide sequence ID" value="NC_009573.1"/>
</dbReference>
<dbReference type="PDB" id="8XLP">
    <property type="method" value="EM"/>
    <property type="resolution" value="2.57 A"/>
    <property type="chains" value="Y/y=1-34"/>
</dbReference>
<dbReference type="PDBsum" id="8XLP"/>
<dbReference type="EMDB" id="EMD-38455"/>
<dbReference type="SMR" id="A6MVU9"/>
<dbReference type="GeneID" id="5228651"/>
<dbReference type="GO" id="GO:0009535">
    <property type="term" value="C:chloroplast thylakoid membrane"/>
    <property type="evidence" value="ECO:0007669"/>
    <property type="project" value="UniProtKB-SubCell"/>
</dbReference>
<dbReference type="GO" id="GO:0009523">
    <property type="term" value="C:photosystem II"/>
    <property type="evidence" value="ECO:0007669"/>
    <property type="project" value="UniProtKB-KW"/>
</dbReference>
<dbReference type="GO" id="GO:0015979">
    <property type="term" value="P:photosynthesis"/>
    <property type="evidence" value="ECO:0007669"/>
    <property type="project" value="UniProtKB-KW"/>
</dbReference>
<dbReference type="HAMAP" id="MF_01329">
    <property type="entry name" value="PSII_Psb30_Ycf12"/>
    <property type="match status" value="1"/>
</dbReference>
<dbReference type="InterPro" id="IPR010284">
    <property type="entry name" value="PSII_Ycf12_core-subunit"/>
</dbReference>
<dbReference type="NCBIfam" id="NF010239">
    <property type="entry name" value="PRK13686.1"/>
    <property type="match status" value="1"/>
</dbReference>
<dbReference type="Pfam" id="PF05969">
    <property type="entry name" value="PSII_Ycf12"/>
    <property type="match status" value="1"/>
</dbReference>
<protein>
    <recommendedName>
        <fullName evidence="1">Photosystem II reaction center protein Psb30</fullName>
    </recommendedName>
    <alternativeName>
        <fullName evidence="1">Photosystem II reaction center protein Ycf12</fullName>
    </alternativeName>
</protein>
<sequence>MPNLQTVAQLISLFLILTSGPAIIVLIALRRGNL</sequence>
<feature type="chain" id="PRO_0000342354" description="Photosystem II reaction center protein Psb30">
    <location>
        <begin position="1"/>
        <end position="34"/>
    </location>
</feature>
<feature type="transmembrane region" description="Helical" evidence="1">
    <location>
        <begin position="7"/>
        <end position="27"/>
    </location>
</feature>
<feature type="helix" evidence="2">
    <location>
        <begin position="4"/>
        <end position="30"/>
    </location>
</feature>
<accession>A6MVU9</accession>
<proteinExistence type="evidence at protein level"/>